<accession>Q54B59</accession>
<comment type="function">
    <text evidence="2">S-adenosyl-L-methionine dependent O-methyltransferase that may be involved in modifying resorcinol ring to synthesize a variant of 4-methyl-5-pentylbenzene-1,3-diol.</text>
</comment>
<comment type="catalytic activity">
    <reaction>
        <text>resorcinol + S-adenosyl-L-methionine = 3-methoxyphenol + S-adenosyl-L-homocysteine + H(+)</text>
        <dbReference type="Rhea" id="RHEA:26321"/>
        <dbReference type="ChEBI" id="CHEBI:15378"/>
        <dbReference type="ChEBI" id="CHEBI:27810"/>
        <dbReference type="ChEBI" id="CHEBI:52678"/>
        <dbReference type="ChEBI" id="CHEBI:57856"/>
        <dbReference type="ChEBI" id="CHEBI:59789"/>
    </reaction>
</comment>
<comment type="similarity">
    <text evidence="1">Belongs to the class I-like SAM-binding methyltransferase superfamily. Cation-independent O-methyltransferase family. COMT subfamily.</text>
</comment>
<proteinExistence type="evidence at protein level"/>
<feature type="chain" id="PRO_0000367480" description="O-methyltransferase 12">
    <location>
        <begin position="1"/>
        <end position="369"/>
    </location>
</feature>
<feature type="active site" description="Proton acceptor" evidence="1">
    <location>
        <position position="248"/>
    </location>
</feature>
<feature type="binding site" evidence="1">
    <location>
        <position position="181"/>
    </location>
    <ligand>
        <name>S-adenosyl-L-methionine</name>
        <dbReference type="ChEBI" id="CHEBI:59789"/>
    </ligand>
</feature>
<feature type="binding site" evidence="1">
    <location>
        <position position="204"/>
    </location>
    <ligand>
        <name>S-adenosyl-L-methionine</name>
        <dbReference type="ChEBI" id="CHEBI:59789"/>
    </ligand>
</feature>
<feature type="binding site" evidence="1">
    <location>
        <begin position="229"/>
        <end position="231"/>
    </location>
    <ligand>
        <name>S-adenosyl-L-methionine</name>
        <dbReference type="ChEBI" id="CHEBI:59789"/>
    </ligand>
</feature>
<feature type="binding site" evidence="1">
    <location>
        <position position="230"/>
    </location>
    <ligand>
        <name>S-adenosyl-L-methionine</name>
        <dbReference type="ChEBI" id="CHEBI:59789"/>
    </ligand>
</feature>
<feature type="binding site" evidence="1">
    <location>
        <position position="231"/>
    </location>
    <ligand>
        <name>S-adenosyl-L-methionine</name>
        <dbReference type="ChEBI" id="CHEBI:59789"/>
    </ligand>
</feature>
<feature type="binding site" evidence="1">
    <location>
        <position position="244"/>
    </location>
    <ligand>
        <name>S-adenosyl-L-methionine</name>
        <dbReference type="ChEBI" id="CHEBI:59789"/>
    </ligand>
</feature>
<organism>
    <name type="scientific">Dictyostelium discoideum</name>
    <name type="common">Social amoeba</name>
    <dbReference type="NCBI Taxonomy" id="44689"/>
    <lineage>
        <taxon>Eukaryota</taxon>
        <taxon>Amoebozoa</taxon>
        <taxon>Evosea</taxon>
        <taxon>Eumycetozoa</taxon>
        <taxon>Dictyostelia</taxon>
        <taxon>Dictyosteliales</taxon>
        <taxon>Dictyosteliaceae</taxon>
        <taxon>Dictyostelium</taxon>
    </lineage>
</organism>
<dbReference type="EC" id="2.1.1.-"/>
<dbReference type="EMBL" id="AAFI02000223">
    <property type="protein sequence ID" value="EAL60515.1"/>
    <property type="molecule type" value="Genomic_DNA"/>
</dbReference>
<dbReference type="RefSeq" id="XP_628929.1">
    <property type="nucleotide sequence ID" value="XM_628927.1"/>
</dbReference>
<dbReference type="SMR" id="Q54B59"/>
<dbReference type="STRING" id="44689.Q54B59"/>
<dbReference type="PaxDb" id="44689-DDB0229899"/>
<dbReference type="EnsemblProtists" id="EAL60515">
    <property type="protein sequence ID" value="EAL60515"/>
    <property type="gene ID" value="DDB_G0293888"/>
</dbReference>
<dbReference type="GeneID" id="8629471"/>
<dbReference type="KEGG" id="ddi:DDB_G0293888"/>
<dbReference type="dictyBase" id="DDB_G0293888">
    <property type="gene designation" value="omt12"/>
</dbReference>
<dbReference type="VEuPathDB" id="AmoebaDB:DDB_G0293888"/>
<dbReference type="eggNOG" id="KOG3178">
    <property type="taxonomic scope" value="Eukaryota"/>
</dbReference>
<dbReference type="HOGENOM" id="CLU_005533_12_0_1"/>
<dbReference type="InParanoid" id="Q54B59"/>
<dbReference type="PhylomeDB" id="Q54B59"/>
<dbReference type="PRO" id="PR:Q54B59"/>
<dbReference type="Proteomes" id="UP000002195">
    <property type="component" value="Chromosome 6"/>
</dbReference>
<dbReference type="GO" id="GO:0008168">
    <property type="term" value="F:methyltransferase activity"/>
    <property type="evidence" value="ECO:0000314"/>
    <property type="project" value="dictyBase"/>
</dbReference>
<dbReference type="GO" id="GO:0008171">
    <property type="term" value="F:O-methyltransferase activity"/>
    <property type="evidence" value="ECO:0000318"/>
    <property type="project" value="GO_Central"/>
</dbReference>
<dbReference type="GO" id="GO:0008757">
    <property type="term" value="F:S-adenosylmethionine-dependent methyltransferase activity"/>
    <property type="evidence" value="ECO:0000318"/>
    <property type="project" value="GO_Central"/>
</dbReference>
<dbReference type="GO" id="GO:0009058">
    <property type="term" value="P:biosynthetic process"/>
    <property type="evidence" value="ECO:0000314"/>
    <property type="project" value="dictyBase"/>
</dbReference>
<dbReference type="GO" id="GO:0032259">
    <property type="term" value="P:methylation"/>
    <property type="evidence" value="ECO:0000318"/>
    <property type="project" value="GO_Central"/>
</dbReference>
<dbReference type="CDD" id="cd02440">
    <property type="entry name" value="AdoMet_MTases"/>
    <property type="match status" value="1"/>
</dbReference>
<dbReference type="FunFam" id="3.40.50.150:FF:000407">
    <property type="entry name" value="O-methyltransferase 4"/>
    <property type="match status" value="1"/>
</dbReference>
<dbReference type="FunFam" id="1.10.10.10:FF:000895">
    <property type="entry name" value="O-methyltransferase 9"/>
    <property type="match status" value="1"/>
</dbReference>
<dbReference type="Gene3D" id="3.40.50.150">
    <property type="entry name" value="Vaccinia Virus protein VP39"/>
    <property type="match status" value="1"/>
</dbReference>
<dbReference type="Gene3D" id="1.10.10.10">
    <property type="entry name" value="Winged helix-like DNA-binding domain superfamily/Winged helix DNA-binding domain"/>
    <property type="match status" value="1"/>
</dbReference>
<dbReference type="InterPro" id="IPR016461">
    <property type="entry name" value="COMT-like"/>
</dbReference>
<dbReference type="InterPro" id="IPR001077">
    <property type="entry name" value="O_MeTrfase_dom"/>
</dbReference>
<dbReference type="InterPro" id="IPR029063">
    <property type="entry name" value="SAM-dependent_MTases_sf"/>
</dbReference>
<dbReference type="InterPro" id="IPR036388">
    <property type="entry name" value="WH-like_DNA-bd_sf"/>
</dbReference>
<dbReference type="InterPro" id="IPR036390">
    <property type="entry name" value="WH_DNA-bd_sf"/>
</dbReference>
<dbReference type="PANTHER" id="PTHR11746">
    <property type="entry name" value="O-METHYLTRANSFERASE"/>
    <property type="match status" value="1"/>
</dbReference>
<dbReference type="Pfam" id="PF00891">
    <property type="entry name" value="Methyltransf_2"/>
    <property type="match status" value="1"/>
</dbReference>
<dbReference type="PIRSF" id="PIRSF005739">
    <property type="entry name" value="O-mtase"/>
    <property type="match status" value="1"/>
</dbReference>
<dbReference type="SUPFAM" id="SSF53335">
    <property type="entry name" value="S-adenosyl-L-methionine-dependent methyltransferases"/>
    <property type="match status" value="1"/>
</dbReference>
<dbReference type="SUPFAM" id="SSF46785">
    <property type="entry name" value="Winged helix' DNA-binding domain"/>
    <property type="match status" value="1"/>
</dbReference>
<dbReference type="PROSITE" id="PS51683">
    <property type="entry name" value="SAM_OMT_II"/>
    <property type="match status" value="1"/>
</dbReference>
<sequence length="369" mass="42586">MSDWDKTMDLLFGFVTGHIHSRMFETILKFSICDLLEDGPKHYSEISKIIGFKNESYCYRLMRYFVPYKLFNESVVQVGLFSKTPSSTQFSKNGTLKNLGRFHCQDHHYRIFESLPKTLEMGKNQGPSSIGLSSFWEHFETDESYKQLFHNAMKDYTSLIIDRLISKISLSPNFKTVVDIGGSHGFLIGKLLESNPNIHGINFDLENIINSSTSKNENFQHPRLKHVSGDFFNSVPEADCYILKYILHDWSDEKCITILNNIHKSLKPNGKLFINDLVLDPSNYTKEAVFKDILMMQYFDAKERSINEWHQLFEKCGFKIDSVDTSISPQLMIVSKINSSNINLNDCTNFNSEIVEEKLKNSLPQFVNC</sequence>
<reference key="1">
    <citation type="journal article" date="2005" name="Nature">
        <title>The genome of the social amoeba Dictyostelium discoideum.</title>
        <authorList>
            <person name="Eichinger L."/>
            <person name="Pachebat J.A."/>
            <person name="Gloeckner G."/>
            <person name="Rajandream M.A."/>
            <person name="Sucgang R."/>
            <person name="Berriman M."/>
            <person name="Song J."/>
            <person name="Olsen R."/>
            <person name="Szafranski K."/>
            <person name="Xu Q."/>
            <person name="Tunggal B."/>
            <person name="Kummerfeld S."/>
            <person name="Madera M."/>
            <person name="Konfortov B.A."/>
            <person name="Rivero F."/>
            <person name="Bankier A.T."/>
            <person name="Lehmann R."/>
            <person name="Hamlin N."/>
            <person name="Davies R."/>
            <person name="Gaudet P."/>
            <person name="Fey P."/>
            <person name="Pilcher K."/>
            <person name="Chen G."/>
            <person name="Saunders D."/>
            <person name="Sodergren E.J."/>
            <person name="Davis P."/>
            <person name="Kerhornou A."/>
            <person name="Nie X."/>
            <person name="Hall N."/>
            <person name="Anjard C."/>
            <person name="Hemphill L."/>
            <person name="Bason N."/>
            <person name="Farbrother P."/>
            <person name="Desany B."/>
            <person name="Just E."/>
            <person name="Morio T."/>
            <person name="Rost R."/>
            <person name="Churcher C.M."/>
            <person name="Cooper J."/>
            <person name="Haydock S."/>
            <person name="van Driessche N."/>
            <person name="Cronin A."/>
            <person name="Goodhead I."/>
            <person name="Muzny D.M."/>
            <person name="Mourier T."/>
            <person name="Pain A."/>
            <person name="Lu M."/>
            <person name="Harper D."/>
            <person name="Lindsay R."/>
            <person name="Hauser H."/>
            <person name="James K.D."/>
            <person name="Quiles M."/>
            <person name="Madan Babu M."/>
            <person name="Saito T."/>
            <person name="Buchrieser C."/>
            <person name="Wardroper A."/>
            <person name="Felder M."/>
            <person name="Thangavelu M."/>
            <person name="Johnson D."/>
            <person name="Knights A."/>
            <person name="Loulseged H."/>
            <person name="Mungall K.L."/>
            <person name="Oliver K."/>
            <person name="Price C."/>
            <person name="Quail M.A."/>
            <person name="Urushihara H."/>
            <person name="Hernandez J."/>
            <person name="Rabbinowitsch E."/>
            <person name="Steffen D."/>
            <person name="Sanders M."/>
            <person name="Ma J."/>
            <person name="Kohara Y."/>
            <person name="Sharp S."/>
            <person name="Simmonds M.N."/>
            <person name="Spiegler S."/>
            <person name="Tivey A."/>
            <person name="Sugano S."/>
            <person name="White B."/>
            <person name="Walker D."/>
            <person name="Woodward J.R."/>
            <person name="Winckler T."/>
            <person name="Tanaka Y."/>
            <person name="Shaulsky G."/>
            <person name="Schleicher M."/>
            <person name="Weinstock G.M."/>
            <person name="Rosenthal A."/>
            <person name="Cox E.C."/>
            <person name="Chisholm R.L."/>
            <person name="Gibbs R.A."/>
            <person name="Loomis W.F."/>
            <person name="Platzer M."/>
            <person name="Kay R.R."/>
            <person name="Williams J.G."/>
            <person name="Dear P.H."/>
            <person name="Noegel A.A."/>
            <person name="Barrell B.G."/>
            <person name="Kuspa A."/>
        </authorList>
    </citation>
    <scope>NUCLEOTIDE SEQUENCE [LARGE SCALE GENOMIC DNA]</scope>
    <source>
        <strain>AX4</strain>
    </source>
</reference>
<reference key="2">
    <citation type="journal article" date="2003" name="Eukaryot. Cell">
        <title>Changing patterns of gene expression in Dictyostelium prestalk cell subtypes recognized by in situ hybridization with genes from microarray analyses.</title>
        <authorList>
            <person name="Maeda M."/>
            <person name="Sakamoto H."/>
            <person name="Iranfar N."/>
            <person name="Fuller D."/>
            <person name="Maruo T."/>
            <person name="Ogihara S."/>
            <person name="Morio T."/>
            <person name="Urushihara H."/>
            <person name="Tanaka Y."/>
            <person name="Loomis W.F."/>
        </authorList>
    </citation>
    <scope>IDENTIFICATION</scope>
</reference>
<reference key="3">
    <citation type="journal article" date="2004" name="Eukaryot. Cell">
        <title>Control of cell type proportioning in Dictyostelium discoideum by differentiation-inducing factor as determined by in situ hybridization.</title>
        <authorList>
            <person name="Maruo T."/>
            <person name="Sakamoto H."/>
            <person name="Iranfar N."/>
            <person name="Fuller D."/>
            <person name="Morio T."/>
            <person name="Urushihara H."/>
            <person name="Tanaka Y."/>
            <person name="Maeda M."/>
            <person name="Loomis W.F."/>
        </authorList>
    </citation>
    <scope>IDENTIFICATION</scope>
</reference>
<reference key="4">
    <citation type="journal article" date="2004" name="Int. J. Dev. Biol.">
        <title>Identification of new modes of Dd-STATa regulation of gene expression in Dictyostelium by in situ hybridisation.</title>
        <authorList>
            <person name="Shimada N."/>
            <person name="Maeda M."/>
            <person name="Urushihara H."/>
            <person name="Kawata T."/>
        </authorList>
    </citation>
    <scope>IDENTIFICATION</scope>
</reference>
<reference key="5">
    <citation type="journal article" date="2008" name="BMC Microbiol.">
        <title>Dictyostelium transcriptional responses to Pseudomonas aeruginosa: common and specific effects from PAO1 and PA14 strains.</title>
        <authorList>
            <person name="Carilla-Latorre S."/>
            <person name="Calvo-Garrido J."/>
            <person name="Bloomfield G."/>
            <person name="Skelton J."/>
            <person name="Kay R.R."/>
            <person name="Ivens A."/>
            <person name="Martinez J.L."/>
            <person name="Escalante R."/>
        </authorList>
    </citation>
    <scope>INDUCTION [LARGE SCALE ANALYSIS]</scope>
</reference>
<reference key="6">
    <citation type="journal article" date="2008" name="J. Biol. Chem.">
        <title>Dissecting the functional role of polyketide synthases in Dictyostelium discoideum: biosynthesis of the differentiation regulating factor 4-methyl-5-pentylbenzene-1,3-diol.</title>
        <authorList>
            <person name="Ghosh R."/>
            <person name="Chhabra A."/>
            <person name="Phatale P.A."/>
            <person name="Samrat S.K."/>
            <person name="Sharma J."/>
            <person name="Gosain A."/>
            <person name="Mohanty D."/>
            <person name="Saran S."/>
            <person name="Gokhale R.S."/>
        </authorList>
    </citation>
    <scope>IDENTIFICATION</scope>
    <scope>FUNCTION</scope>
    <scope>CHARACTERIZATION</scope>
</reference>
<keyword id="KW-0489">Methyltransferase</keyword>
<keyword id="KW-1185">Reference proteome</keyword>
<keyword id="KW-0949">S-adenosyl-L-methionine</keyword>
<keyword id="KW-0808">Transferase</keyword>
<gene>
    <name type="primary">omt12</name>
    <name type="ORF">DDB_G0293888</name>
</gene>
<protein>
    <recommendedName>
        <fullName>O-methyltransferase 12</fullName>
        <ecNumber>2.1.1.-</ecNumber>
    </recommendedName>
</protein>
<name>OMT12_DICDI</name>
<evidence type="ECO:0000255" key="1">
    <source>
        <dbReference type="PROSITE-ProRule" id="PRU01020"/>
    </source>
</evidence>
<evidence type="ECO:0000269" key="2">
    <source>
    </source>
</evidence>